<sequence>MEEFQGYIELEGSWQHNFFYPLIFQEYIFSFAYGHDLNKSILLETSGNRKYSLLIVKRLITRMYQHNHLILSSNDSNQNDFWGHKRNFYSQMISEGFSLIVEIPFYLLLIASPEKKKIVKSHNLRSIHSIFPFLEDKFLHLNSVLDILLPYPTHLEILVQTLRYWIRDASSLHLLRLFLYEYHNWNSLFIPKKSIYFFFKRNQRLFLFLYNFHVCEYESILFFICNQSSHLRATSYGALLERTFFYGKLEYLVKLFTKDFAGILWLFKDPSPHSVRYKGKSILASKGTFFLMHKWKFYLIYFWQCNFSVWSHPRRIYINRLSTHCLDFIGFFSSVQLTSSVVRSQILENTFLIDNTIKRFDPKIPISTLIGSLAKAQFCNRLGHPISKSVWIDLSDSDIIDRFGRICRNLSHYYSGSSRKKSLYRLKYILKISCARTLARKHKSAVRAFLKRLGSEFLEEFFTEQEKVLSLILPKNGSNSWGFYGGSIWYLDIICIHNLANDE</sequence>
<organism>
    <name type="scientific">Silene latifolia</name>
    <name type="common">White campion</name>
    <name type="synonym">Bladder campion</name>
    <dbReference type="NCBI Taxonomy" id="37657"/>
    <lineage>
        <taxon>Eukaryota</taxon>
        <taxon>Viridiplantae</taxon>
        <taxon>Streptophyta</taxon>
        <taxon>Embryophyta</taxon>
        <taxon>Tracheophyta</taxon>
        <taxon>Spermatophyta</taxon>
        <taxon>Magnoliopsida</taxon>
        <taxon>eudicotyledons</taxon>
        <taxon>Gunneridae</taxon>
        <taxon>Pentapetalae</taxon>
        <taxon>Caryophyllales</taxon>
        <taxon>Caryophyllaceae</taxon>
        <taxon>Sileneae</taxon>
        <taxon>Silene</taxon>
        <taxon>Silene subgen. Behenantha</taxon>
        <taxon>Silene sect. Melandrium</taxon>
    </lineage>
</organism>
<keyword id="KW-0150">Chloroplast</keyword>
<keyword id="KW-0507">mRNA processing</keyword>
<keyword id="KW-0934">Plastid</keyword>
<keyword id="KW-0694">RNA-binding</keyword>
<keyword id="KW-0819">tRNA processing</keyword>
<gene>
    <name evidence="1" type="primary">matK</name>
</gene>
<reference key="1">
    <citation type="submission" date="2004-08" db="EMBL/GenBank/DDBJ databases">
        <title>A partial chloroplast genome of Silene latifolia.</title>
        <authorList>
            <person name="Kejnovsky E."/>
            <person name="Kubat Z."/>
            <person name="Hobza R."/>
            <person name="Lengerova M."/>
            <person name="Sato S."/>
            <person name="Tabata S."/>
            <person name="Fukui K."/>
            <person name="Matsunaga S."/>
            <person name="Vyskot B."/>
        </authorList>
    </citation>
    <scope>NUCLEOTIDE SEQUENCE [GENOMIC DNA]</scope>
</reference>
<feature type="chain" id="PRO_0000143706" description="Maturase K">
    <location>
        <begin position="1"/>
        <end position="503"/>
    </location>
</feature>
<proteinExistence type="inferred from homology"/>
<accession>Q589A9</accession>
<comment type="function">
    <text evidence="1">Usually encoded in the trnK tRNA gene intron. Probably assists in splicing its own and other chloroplast group II introns.</text>
</comment>
<comment type="subcellular location">
    <subcellularLocation>
        <location>Plastid</location>
        <location>Chloroplast</location>
    </subcellularLocation>
</comment>
<comment type="similarity">
    <text evidence="1">Belongs to the intron maturase 2 family. MatK subfamily.</text>
</comment>
<evidence type="ECO:0000255" key="1">
    <source>
        <dbReference type="HAMAP-Rule" id="MF_01390"/>
    </source>
</evidence>
<name>MATK_SILLA</name>
<dbReference type="EMBL" id="AB189069">
    <property type="protein sequence ID" value="BAD93468.1"/>
    <property type="molecule type" value="Genomic_DNA"/>
</dbReference>
<dbReference type="RefSeq" id="YP_005089558.1">
    <property type="nucleotide sequence ID" value="NC_016730.1"/>
</dbReference>
<dbReference type="GeneID" id="11541163"/>
<dbReference type="GO" id="GO:0009507">
    <property type="term" value="C:chloroplast"/>
    <property type="evidence" value="ECO:0007669"/>
    <property type="project" value="UniProtKB-SubCell"/>
</dbReference>
<dbReference type="GO" id="GO:0003723">
    <property type="term" value="F:RNA binding"/>
    <property type="evidence" value="ECO:0007669"/>
    <property type="project" value="UniProtKB-KW"/>
</dbReference>
<dbReference type="GO" id="GO:0006397">
    <property type="term" value="P:mRNA processing"/>
    <property type="evidence" value="ECO:0007669"/>
    <property type="project" value="UniProtKB-KW"/>
</dbReference>
<dbReference type="GO" id="GO:0008380">
    <property type="term" value="P:RNA splicing"/>
    <property type="evidence" value="ECO:0007669"/>
    <property type="project" value="UniProtKB-UniRule"/>
</dbReference>
<dbReference type="GO" id="GO:0008033">
    <property type="term" value="P:tRNA processing"/>
    <property type="evidence" value="ECO:0007669"/>
    <property type="project" value="UniProtKB-KW"/>
</dbReference>
<dbReference type="HAMAP" id="MF_01390">
    <property type="entry name" value="MatK"/>
    <property type="match status" value="1"/>
</dbReference>
<dbReference type="InterPro" id="IPR024937">
    <property type="entry name" value="Domain_X"/>
</dbReference>
<dbReference type="InterPro" id="IPR002866">
    <property type="entry name" value="Maturase_MatK"/>
</dbReference>
<dbReference type="InterPro" id="IPR024942">
    <property type="entry name" value="Maturase_MatK_N"/>
</dbReference>
<dbReference type="PANTHER" id="PTHR34811">
    <property type="entry name" value="MATURASE K"/>
    <property type="match status" value="1"/>
</dbReference>
<dbReference type="PANTHER" id="PTHR34811:SF1">
    <property type="entry name" value="MATURASE K"/>
    <property type="match status" value="1"/>
</dbReference>
<dbReference type="Pfam" id="PF01348">
    <property type="entry name" value="Intron_maturas2"/>
    <property type="match status" value="1"/>
</dbReference>
<dbReference type="Pfam" id="PF01824">
    <property type="entry name" value="MatK_N"/>
    <property type="match status" value="1"/>
</dbReference>
<geneLocation type="chloroplast"/>
<protein>
    <recommendedName>
        <fullName evidence="1">Maturase K</fullName>
    </recommendedName>
    <alternativeName>
        <fullName evidence="1">Intron maturase</fullName>
    </alternativeName>
</protein>